<sequence>MESLTIRRQEERKPLAKIDGATIDVDAIWAQMNAPDSKLGLAPIPDAQKQDETPASDTEVRDQENANPTEPNGPAEKGFQQTSEMVKIKRTYKFAGEMITEEKIVPRDSAEAKLFLSGNGDGEVIPVTEDEVANMTGKGNENTSTNNTLRIRRPLRKISRFDPNPSGMIKKSWGKQSLTETGARTGAGQENIRGPKINTVEKSRLDWVAYVDQEGISDELRMHSKAKEGFLGRMDFLNRVDAKKEEERRNARLRGV</sequence>
<protein>
    <recommendedName>
        <fullName>SWR1-complex protein 5</fullName>
    </recommendedName>
</protein>
<accession>Q5BER4</accession>
<accession>C8VUF2</accession>
<accession>P79035</accession>
<organism>
    <name type="scientific">Emericella nidulans (strain FGSC A4 / ATCC 38163 / CBS 112.46 / NRRL 194 / M139)</name>
    <name type="common">Aspergillus nidulans</name>
    <dbReference type="NCBI Taxonomy" id="227321"/>
    <lineage>
        <taxon>Eukaryota</taxon>
        <taxon>Fungi</taxon>
        <taxon>Dikarya</taxon>
        <taxon>Ascomycota</taxon>
        <taxon>Pezizomycotina</taxon>
        <taxon>Eurotiomycetes</taxon>
        <taxon>Eurotiomycetidae</taxon>
        <taxon>Eurotiales</taxon>
        <taxon>Aspergillaceae</taxon>
        <taxon>Aspergillus</taxon>
        <taxon>Aspergillus subgen. Nidulantes</taxon>
    </lineage>
</organism>
<evidence type="ECO:0000250" key="1"/>
<evidence type="ECO:0000255" key="2">
    <source>
        <dbReference type="PROSITE-ProRule" id="PRU00610"/>
    </source>
</evidence>
<evidence type="ECO:0000256" key="3">
    <source>
        <dbReference type="SAM" id="MobiDB-lite"/>
    </source>
</evidence>
<evidence type="ECO:0000305" key="4"/>
<comment type="function">
    <text evidence="1">Component of the SWR1 complex which mediates the ATP-dependent exchange of histone H2A for the H2A variant HZT1 leading to transcriptional regulation of selected genes by chromatin remodeling. Involved in chromosome stability (By similarity).</text>
</comment>
<comment type="subunit">
    <text evidence="1">Component of the SWR1 chromatin remodeling complex.</text>
</comment>
<comment type="subcellular location">
    <subcellularLocation>
        <location evidence="1">Nucleus</location>
    </subcellularLocation>
</comment>
<comment type="similarity">
    <text evidence="4">Belongs to the SWC5 family.</text>
</comment>
<comment type="sequence caution" evidence="4">
    <conflict type="erroneous initiation">
        <sequence resource="EMBL-CDS" id="AAB48683"/>
    </conflict>
</comment>
<dbReference type="EMBL" id="AC000133">
    <property type="protein sequence ID" value="AAB48683.1"/>
    <property type="status" value="ALT_INIT"/>
    <property type="molecule type" value="Genomic_DNA"/>
</dbReference>
<dbReference type="EMBL" id="AACD01000014">
    <property type="protein sequence ID" value="EAA65995.1"/>
    <property type="molecule type" value="Genomic_DNA"/>
</dbReference>
<dbReference type="EMBL" id="BN001308">
    <property type="protein sequence ID" value="CBF88430.1"/>
    <property type="molecule type" value="Genomic_DNA"/>
</dbReference>
<dbReference type="RefSeq" id="XP_658570.1">
    <property type="nucleotide sequence ID" value="XM_653478.1"/>
</dbReference>
<dbReference type="SMR" id="Q5BER4"/>
<dbReference type="STRING" id="227321.Q5BER4"/>
<dbReference type="EnsemblFungi" id="CBF88430">
    <property type="protein sequence ID" value="CBF88430"/>
    <property type="gene ID" value="ANIA_00966"/>
</dbReference>
<dbReference type="KEGG" id="ani:ANIA_00966"/>
<dbReference type="VEuPathDB" id="FungiDB:AN0966"/>
<dbReference type="eggNOG" id="KOG4776">
    <property type="taxonomic scope" value="Eukaryota"/>
</dbReference>
<dbReference type="HOGENOM" id="CLU_062474_2_0_1"/>
<dbReference type="InParanoid" id="Q5BER4"/>
<dbReference type="OMA" id="EMISIPH"/>
<dbReference type="OrthoDB" id="445677at2759"/>
<dbReference type="Proteomes" id="UP000000560">
    <property type="component" value="Chromosome VIII"/>
</dbReference>
<dbReference type="GO" id="GO:0005634">
    <property type="term" value="C:nucleus"/>
    <property type="evidence" value="ECO:0007669"/>
    <property type="project" value="UniProtKB-SubCell"/>
</dbReference>
<dbReference type="GO" id="GO:0006325">
    <property type="term" value="P:chromatin organization"/>
    <property type="evidence" value="ECO:0007669"/>
    <property type="project" value="UniProtKB-KW"/>
</dbReference>
<dbReference type="InterPro" id="IPR011421">
    <property type="entry name" value="BCNT-C"/>
</dbReference>
<dbReference type="InterPro" id="IPR027124">
    <property type="entry name" value="Swc5/CFDP1/2"/>
</dbReference>
<dbReference type="PANTHER" id="PTHR48295">
    <property type="entry name" value="CRANIOFACIAL DEVELOPMENT PROTEIN 1"/>
    <property type="match status" value="1"/>
</dbReference>
<dbReference type="PANTHER" id="PTHR48295:SF1">
    <property type="entry name" value="SWR1-COMPLEX PROTEIN 5"/>
    <property type="match status" value="1"/>
</dbReference>
<dbReference type="Pfam" id="PF07572">
    <property type="entry name" value="BCNT"/>
    <property type="match status" value="1"/>
</dbReference>
<dbReference type="PROSITE" id="PS51279">
    <property type="entry name" value="BCNT_C"/>
    <property type="match status" value="1"/>
</dbReference>
<reference key="1">
    <citation type="submission" date="1997-03" db="EMBL/GenBank/DDBJ databases">
        <title>Why is Aspergillus nidulans genomics important in gene function assignments?</title>
        <authorList>
            <person name="Kupfer D.M."/>
            <person name="Reece C.A."/>
            <person name="Clifton S.W."/>
            <person name="Roe B.A."/>
            <person name="Prade R.A."/>
        </authorList>
    </citation>
    <scope>NUCLEOTIDE SEQUENCE [GENOMIC DNA]</scope>
</reference>
<reference key="2">
    <citation type="journal article" date="2005" name="Nature">
        <title>Sequencing of Aspergillus nidulans and comparative analysis with A. fumigatus and A. oryzae.</title>
        <authorList>
            <person name="Galagan J.E."/>
            <person name="Calvo S.E."/>
            <person name="Cuomo C."/>
            <person name="Ma L.-J."/>
            <person name="Wortman J.R."/>
            <person name="Batzoglou S."/>
            <person name="Lee S.-I."/>
            <person name="Bastuerkmen M."/>
            <person name="Spevak C.C."/>
            <person name="Clutterbuck J."/>
            <person name="Kapitonov V."/>
            <person name="Jurka J."/>
            <person name="Scazzocchio C."/>
            <person name="Farman M.L."/>
            <person name="Butler J."/>
            <person name="Purcell S."/>
            <person name="Harris S."/>
            <person name="Braus G.H."/>
            <person name="Draht O."/>
            <person name="Busch S."/>
            <person name="D'Enfert C."/>
            <person name="Bouchier C."/>
            <person name="Goldman G.H."/>
            <person name="Bell-Pedersen D."/>
            <person name="Griffiths-Jones S."/>
            <person name="Doonan J.H."/>
            <person name="Yu J."/>
            <person name="Vienken K."/>
            <person name="Pain A."/>
            <person name="Freitag M."/>
            <person name="Selker E.U."/>
            <person name="Archer D.B."/>
            <person name="Penalva M.A."/>
            <person name="Oakley B.R."/>
            <person name="Momany M."/>
            <person name="Tanaka T."/>
            <person name="Kumagai T."/>
            <person name="Asai K."/>
            <person name="Machida M."/>
            <person name="Nierman W.C."/>
            <person name="Denning D.W."/>
            <person name="Caddick M.X."/>
            <person name="Hynes M."/>
            <person name="Paoletti M."/>
            <person name="Fischer R."/>
            <person name="Miller B.L."/>
            <person name="Dyer P.S."/>
            <person name="Sachs M.S."/>
            <person name="Osmani S.A."/>
            <person name="Birren B.W."/>
        </authorList>
    </citation>
    <scope>NUCLEOTIDE SEQUENCE [LARGE SCALE GENOMIC DNA]</scope>
    <source>
        <strain>FGSC A4 / ATCC 38163 / CBS 112.46 / NRRL 194 / M139</strain>
    </source>
</reference>
<reference key="3">
    <citation type="journal article" date="2009" name="Fungal Genet. Biol.">
        <title>The 2008 update of the Aspergillus nidulans genome annotation: a community effort.</title>
        <authorList>
            <person name="Wortman J.R."/>
            <person name="Gilsenan J.M."/>
            <person name="Joardar V."/>
            <person name="Deegan J."/>
            <person name="Clutterbuck J."/>
            <person name="Andersen M.R."/>
            <person name="Archer D."/>
            <person name="Bencina M."/>
            <person name="Braus G."/>
            <person name="Coutinho P."/>
            <person name="von Dohren H."/>
            <person name="Doonan J."/>
            <person name="Driessen A.J."/>
            <person name="Durek P."/>
            <person name="Espeso E."/>
            <person name="Fekete E."/>
            <person name="Flipphi M."/>
            <person name="Estrada C.G."/>
            <person name="Geysens S."/>
            <person name="Goldman G."/>
            <person name="de Groot P.W."/>
            <person name="Hansen K."/>
            <person name="Harris S.D."/>
            <person name="Heinekamp T."/>
            <person name="Helmstaedt K."/>
            <person name="Henrissat B."/>
            <person name="Hofmann G."/>
            <person name="Homan T."/>
            <person name="Horio T."/>
            <person name="Horiuchi H."/>
            <person name="James S."/>
            <person name="Jones M."/>
            <person name="Karaffa L."/>
            <person name="Karanyi Z."/>
            <person name="Kato M."/>
            <person name="Keller N."/>
            <person name="Kelly D.E."/>
            <person name="Kiel J.A."/>
            <person name="Kim J.M."/>
            <person name="van der Klei I.J."/>
            <person name="Klis F.M."/>
            <person name="Kovalchuk A."/>
            <person name="Krasevec N."/>
            <person name="Kubicek C.P."/>
            <person name="Liu B."/>
            <person name="Maccabe A."/>
            <person name="Meyer V."/>
            <person name="Mirabito P."/>
            <person name="Miskei M."/>
            <person name="Mos M."/>
            <person name="Mullins J."/>
            <person name="Nelson D.R."/>
            <person name="Nielsen J."/>
            <person name="Oakley B.R."/>
            <person name="Osmani S.A."/>
            <person name="Pakula T."/>
            <person name="Paszewski A."/>
            <person name="Paulsen I."/>
            <person name="Pilsyk S."/>
            <person name="Pocsi I."/>
            <person name="Punt P.J."/>
            <person name="Ram A.F."/>
            <person name="Ren Q."/>
            <person name="Robellet X."/>
            <person name="Robson G."/>
            <person name="Seiboth B."/>
            <person name="van Solingen P."/>
            <person name="Specht T."/>
            <person name="Sun J."/>
            <person name="Taheri-Talesh N."/>
            <person name="Takeshita N."/>
            <person name="Ussery D."/>
            <person name="vanKuyk P.A."/>
            <person name="Visser H."/>
            <person name="van de Vondervoort P.J."/>
            <person name="de Vries R.P."/>
            <person name="Walton J."/>
            <person name="Xiang X."/>
            <person name="Xiong Y."/>
            <person name="Zeng A.P."/>
            <person name="Brandt B.W."/>
            <person name="Cornell M.J."/>
            <person name="van den Hondel C.A."/>
            <person name="Visser J."/>
            <person name="Oliver S.G."/>
            <person name="Turner G."/>
        </authorList>
    </citation>
    <scope>GENOME REANNOTATION</scope>
    <source>
        <strain>FGSC A4 / ATCC 38163 / CBS 112.46 / NRRL 194 / M139</strain>
    </source>
</reference>
<gene>
    <name type="primary">swc5</name>
    <name type="ORF">AN0966</name>
</gene>
<name>SWC5_EMENI</name>
<feature type="chain" id="PRO_0000212506" description="SWR1-complex protein 5">
    <location>
        <begin position="1"/>
        <end position="256"/>
    </location>
</feature>
<feature type="domain" description="BCNT-C" evidence="2">
    <location>
        <begin position="177"/>
        <end position="256"/>
    </location>
</feature>
<feature type="region of interest" description="Disordered" evidence="3">
    <location>
        <begin position="37"/>
        <end position="83"/>
    </location>
</feature>
<feature type="compositionally biased region" description="Basic and acidic residues" evidence="3">
    <location>
        <begin position="48"/>
        <end position="64"/>
    </location>
</feature>
<proteinExistence type="inferred from homology"/>
<keyword id="KW-0010">Activator</keyword>
<keyword id="KW-0156">Chromatin regulator</keyword>
<keyword id="KW-0539">Nucleus</keyword>
<keyword id="KW-1185">Reference proteome</keyword>
<keyword id="KW-0804">Transcription</keyword>
<keyword id="KW-0805">Transcription regulation</keyword>